<name>SUS1_CANGA</name>
<keyword id="KW-0010">Activator</keyword>
<keyword id="KW-0156">Chromatin regulator</keyword>
<keyword id="KW-0963">Cytoplasm</keyword>
<keyword id="KW-0509">mRNA transport</keyword>
<keyword id="KW-0539">Nucleus</keyword>
<keyword id="KW-0653">Protein transport</keyword>
<keyword id="KW-1185">Reference proteome</keyword>
<keyword id="KW-0804">Transcription</keyword>
<keyword id="KW-0805">Transcription regulation</keyword>
<keyword id="KW-0811">Translocation</keyword>
<keyword id="KW-0813">Transport</keyword>
<comment type="function">
    <text evidence="1">Involved in mRNA export coupled transcription activation by association with both the TREX-2 and the SAGA complexes. At the promoters, SAGA is required for recruitment of the basal transcription machinery. It influences RNA polymerase II transcriptional activity through different activities such as TBP interaction and promoter selectivity, interaction with transcription activators, and chromatin modification through histone acetylation and deubiquitination. Within the SAGA complex, participates in a subcomplex required for deubiquitination of H2B and for the maintenance of steady-state H3 methylation levels. The TREX-2 complex functions in docking export-competent ribonucleoprotein particles (mRNPs) to the nuclear entrance of the nuclear pore complex (nuclear basket). TREX-2 participates in mRNA export and accurate chromatin positioning in the nucleus by tethering genes to the nuclear periphery. May also be involved in cytoplasmic mRNA decay by interaction with components of P-bodies (By similarity).</text>
</comment>
<comment type="subunit">
    <text evidence="2">Component of the nuclear pore complex (NPC)-associated TREX-2 complex (transcription and export complex 2), composed of at least SUS1, SAC3, THP1, SEM1, and CDC31. TREX-2 contains 2 SUS1 chains. The TREX-2 complex interacts with the nucleoporin NUP1. Component of the 1.8 MDa SAGA transcription coactivator-HAT complex. SAGA is built of 5 distinct domains with specialized functions. Within the SAGA complex, SUS1, SGF11, SGF73 and UBP8 form an additional subcomplex of SAGA called the DUB module (deubiquitination module). Interacts directly with THP1, SAC3, SGF11, and with the RNA polymerase II.</text>
</comment>
<comment type="subcellular location">
    <subcellularLocation>
        <location evidence="2">Nucleus</location>
        <location evidence="2">Nucleoplasm</location>
    </subcellularLocation>
    <subcellularLocation>
        <location evidence="2">Cytoplasm</location>
        <location evidence="2">P-body</location>
    </subcellularLocation>
</comment>
<comment type="similarity">
    <text evidence="2">Belongs to the ENY2 family.</text>
</comment>
<gene>
    <name evidence="2" type="primary">SUS1</name>
    <name type="ordered locus">CAGL0K07755g</name>
</gene>
<evidence type="ECO:0000250" key="1"/>
<evidence type="ECO:0000255" key="2">
    <source>
        <dbReference type="HAMAP-Rule" id="MF_03046"/>
    </source>
</evidence>
<sequence length="100" mass="11287">MTISSNENSASLRAQIQQCLVESGNYEAISNELTERLLKDGWLDEVKKLAREEISQEDSPNFSKALSQIEPQALDLVQQSTKDAIMRKITAFLEEIVETE</sequence>
<proteinExistence type="inferred from homology"/>
<protein>
    <recommendedName>
        <fullName evidence="2">Transcription and mRNA export factor SUS1</fullName>
    </recommendedName>
</protein>
<organism>
    <name type="scientific">Candida glabrata (strain ATCC 2001 / BCRC 20586 / JCM 3761 / NBRC 0622 / NRRL Y-65 / CBS 138)</name>
    <name type="common">Yeast</name>
    <name type="synonym">Nakaseomyces glabratus</name>
    <dbReference type="NCBI Taxonomy" id="284593"/>
    <lineage>
        <taxon>Eukaryota</taxon>
        <taxon>Fungi</taxon>
        <taxon>Dikarya</taxon>
        <taxon>Ascomycota</taxon>
        <taxon>Saccharomycotina</taxon>
        <taxon>Saccharomycetes</taxon>
        <taxon>Saccharomycetales</taxon>
        <taxon>Saccharomycetaceae</taxon>
        <taxon>Nakaseomyces</taxon>
    </lineage>
</organism>
<dbReference type="EMBL" id="CR380957">
    <property type="protein sequence ID" value="CAR58054.1"/>
    <property type="molecule type" value="Genomic_DNA"/>
</dbReference>
<dbReference type="RefSeq" id="XP_002999581.1">
    <property type="nucleotide sequence ID" value="XM_002999535.1"/>
</dbReference>
<dbReference type="SMR" id="B4UN38"/>
<dbReference type="FunCoup" id="B4UN38">
    <property type="interactions" value="374"/>
</dbReference>
<dbReference type="STRING" id="284593.B4UN38"/>
<dbReference type="EnsemblFungi" id="CAGL0K07755g-T">
    <property type="protein sequence ID" value="CAGL0K07755g-T-p1"/>
    <property type="gene ID" value="CAGL0K07755g"/>
</dbReference>
<dbReference type="KEGG" id="cgr:9488033"/>
<dbReference type="CGD" id="CAL0134809">
    <property type="gene designation" value="SUS1"/>
</dbReference>
<dbReference type="VEuPathDB" id="FungiDB:CAGL0K07755g"/>
<dbReference type="eggNOG" id="ENOG502S9WJ">
    <property type="taxonomic scope" value="Eukaryota"/>
</dbReference>
<dbReference type="HOGENOM" id="CLU_134052_2_1_1"/>
<dbReference type="InParanoid" id="B4UN38"/>
<dbReference type="OMA" id="YESGWFD"/>
<dbReference type="Proteomes" id="UP000002428">
    <property type="component" value="Chromosome K"/>
</dbReference>
<dbReference type="GO" id="GO:0071819">
    <property type="term" value="C:DUBm complex"/>
    <property type="evidence" value="ECO:0007669"/>
    <property type="project" value="UniProtKB-UniRule"/>
</dbReference>
<dbReference type="GO" id="GO:0005643">
    <property type="term" value="C:nuclear pore"/>
    <property type="evidence" value="ECO:0007669"/>
    <property type="project" value="UniProtKB-UniRule"/>
</dbReference>
<dbReference type="GO" id="GO:0005654">
    <property type="term" value="C:nucleoplasm"/>
    <property type="evidence" value="ECO:0007669"/>
    <property type="project" value="UniProtKB-SubCell"/>
</dbReference>
<dbReference type="GO" id="GO:0000932">
    <property type="term" value="C:P-body"/>
    <property type="evidence" value="ECO:0007669"/>
    <property type="project" value="UniProtKB-SubCell"/>
</dbReference>
<dbReference type="GO" id="GO:0000124">
    <property type="term" value="C:SAGA complex"/>
    <property type="evidence" value="ECO:0007669"/>
    <property type="project" value="UniProtKB-UniRule"/>
</dbReference>
<dbReference type="GO" id="GO:0046695">
    <property type="term" value="C:SLIK (SAGA-like) complex"/>
    <property type="evidence" value="ECO:0007669"/>
    <property type="project" value="EnsemblFungi"/>
</dbReference>
<dbReference type="GO" id="GO:0070390">
    <property type="term" value="C:transcription export complex 2"/>
    <property type="evidence" value="ECO:0007669"/>
    <property type="project" value="UniProtKB-UniRule"/>
</dbReference>
<dbReference type="GO" id="GO:0003682">
    <property type="term" value="F:chromatin binding"/>
    <property type="evidence" value="ECO:0007669"/>
    <property type="project" value="EnsemblFungi"/>
</dbReference>
<dbReference type="GO" id="GO:0008047">
    <property type="term" value="F:enzyme activator activity"/>
    <property type="evidence" value="ECO:0007669"/>
    <property type="project" value="EnsemblFungi"/>
</dbReference>
<dbReference type="GO" id="GO:0003713">
    <property type="term" value="F:transcription coactivator activity"/>
    <property type="evidence" value="ECO:0007669"/>
    <property type="project" value="UniProtKB-UniRule"/>
</dbReference>
<dbReference type="GO" id="GO:0006338">
    <property type="term" value="P:chromatin remodeling"/>
    <property type="evidence" value="ECO:0007669"/>
    <property type="project" value="GOC"/>
</dbReference>
<dbReference type="GO" id="GO:0071028">
    <property type="term" value="P:nuclear mRNA surveillance"/>
    <property type="evidence" value="ECO:0007669"/>
    <property type="project" value="EnsemblFungi"/>
</dbReference>
<dbReference type="GO" id="GO:0016973">
    <property type="term" value="P:poly(A)+ mRNA export from nucleus"/>
    <property type="evidence" value="ECO:0007669"/>
    <property type="project" value="EnsemblFungi"/>
</dbReference>
<dbReference type="GO" id="GO:0045944">
    <property type="term" value="P:positive regulation of transcription by RNA polymerase II"/>
    <property type="evidence" value="ECO:0007669"/>
    <property type="project" value="EnsemblFungi"/>
</dbReference>
<dbReference type="GO" id="GO:0000973">
    <property type="term" value="P:post-transcriptional tethering of RNA polymerase II gene DNA at nuclear periphery"/>
    <property type="evidence" value="ECO:0007669"/>
    <property type="project" value="EnsemblFungi"/>
</dbReference>
<dbReference type="GO" id="GO:0015031">
    <property type="term" value="P:protein transport"/>
    <property type="evidence" value="ECO:0007669"/>
    <property type="project" value="UniProtKB-KW"/>
</dbReference>
<dbReference type="GO" id="GO:0032880">
    <property type="term" value="P:regulation of protein localization"/>
    <property type="evidence" value="ECO:0007669"/>
    <property type="project" value="EnsemblFungi"/>
</dbReference>
<dbReference type="GO" id="GO:0006368">
    <property type="term" value="P:transcription elongation by RNA polymerase II"/>
    <property type="evidence" value="ECO:0007669"/>
    <property type="project" value="UniProtKB-UniRule"/>
</dbReference>
<dbReference type="Gene3D" id="1.10.246.140">
    <property type="match status" value="1"/>
</dbReference>
<dbReference type="HAMAP" id="MF_03046">
    <property type="entry name" value="ENY2_Sus1"/>
    <property type="match status" value="1"/>
</dbReference>
<dbReference type="InterPro" id="IPR018783">
    <property type="entry name" value="TF_ENY2"/>
</dbReference>
<dbReference type="InterPro" id="IPR038212">
    <property type="entry name" value="TF_EnY2_sf"/>
</dbReference>
<dbReference type="PANTHER" id="PTHR12514">
    <property type="entry name" value="ENHANCER OF YELLOW 2 TRANSCRIPTION FACTOR"/>
    <property type="match status" value="1"/>
</dbReference>
<dbReference type="Pfam" id="PF10163">
    <property type="entry name" value="EnY2"/>
    <property type="match status" value="1"/>
</dbReference>
<feature type="chain" id="PRO_0000367566" description="Transcription and mRNA export factor SUS1">
    <location>
        <begin position="1"/>
        <end position="100"/>
    </location>
</feature>
<accession>B4UN38</accession>
<reference key="1">
    <citation type="journal article" date="2004" name="Nature">
        <title>Genome evolution in yeasts.</title>
        <authorList>
            <person name="Dujon B."/>
            <person name="Sherman D."/>
            <person name="Fischer G."/>
            <person name="Durrens P."/>
            <person name="Casaregola S."/>
            <person name="Lafontaine I."/>
            <person name="de Montigny J."/>
            <person name="Marck C."/>
            <person name="Neuveglise C."/>
            <person name="Talla E."/>
            <person name="Goffard N."/>
            <person name="Frangeul L."/>
            <person name="Aigle M."/>
            <person name="Anthouard V."/>
            <person name="Babour A."/>
            <person name="Barbe V."/>
            <person name="Barnay S."/>
            <person name="Blanchin S."/>
            <person name="Beckerich J.-M."/>
            <person name="Beyne E."/>
            <person name="Bleykasten C."/>
            <person name="Boisrame A."/>
            <person name="Boyer J."/>
            <person name="Cattolico L."/>
            <person name="Confanioleri F."/>
            <person name="de Daruvar A."/>
            <person name="Despons L."/>
            <person name="Fabre E."/>
            <person name="Fairhead C."/>
            <person name="Ferry-Dumazet H."/>
            <person name="Groppi A."/>
            <person name="Hantraye F."/>
            <person name="Hennequin C."/>
            <person name="Jauniaux N."/>
            <person name="Joyet P."/>
            <person name="Kachouri R."/>
            <person name="Kerrest A."/>
            <person name="Koszul R."/>
            <person name="Lemaire M."/>
            <person name="Lesur I."/>
            <person name="Ma L."/>
            <person name="Muller H."/>
            <person name="Nicaud J.-M."/>
            <person name="Nikolski M."/>
            <person name="Oztas S."/>
            <person name="Ozier-Kalogeropoulos O."/>
            <person name="Pellenz S."/>
            <person name="Potier S."/>
            <person name="Richard G.-F."/>
            <person name="Straub M.-L."/>
            <person name="Suleau A."/>
            <person name="Swennen D."/>
            <person name="Tekaia F."/>
            <person name="Wesolowski-Louvel M."/>
            <person name="Westhof E."/>
            <person name="Wirth B."/>
            <person name="Zeniou-Meyer M."/>
            <person name="Zivanovic Y."/>
            <person name="Bolotin-Fukuhara M."/>
            <person name="Thierry A."/>
            <person name="Bouchier C."/>
            <person name="Caudron B."/>
            <person name="Scarpelli C."/>
            <person name="Gaillardin C."/>
            <person name="Weissenbach J."/>
            <person name="Wincker P."/>
            <person name="Souciet J.-L."/>
        </authorList>
    </citation>
    <scope>NUCLEOTIDE SEQUENCE [LARGE SCALE GENOMIC DNA]</scope>
    <source>
        <strain>ATCC 2001 / BCRC 20586 / JCM 3761 / NBRC 0622 / NRRL Y-65 / CBS 138</strain>
    </source>
</reference>